<organism>
    <name type="scientific">Narcissus pseudonarcissus</name>
    <name type="common">Daffodil</name>
    <dbReference type="NCBI Taxonomy" id="39639"/>
    <lineage>
        <taxon>Eukaryota</taxon>
        <taxon>Viridiplantae</taxon>
        <taxon>Streptophyta</taxon>
        <taxon>Embryophyta</taxon>
        <taxon>Tracheophyta</taxon>
        <taxon>Spermatophyta</taxon>
        <taxon>Magnoliopsida</taxon>
        <taxon>Liliopsida</taxon>
        <taxon>Asparagales</taxon>
        <taxon>Amaryllidaceae</taxon>
        <taxon>Amaryllidoideae</taxon>
        <taxon>Narcissus</taxon>
    </lineage>
</organism>
<name>PSY_NARPS</name>
<accession>P53797</accession>
<dbReference type="EC" id="2.5.1.32"/>
<dbReference type="EMBL" id="X78814">
    <property type="protein sequence ID" value="CAA55391.1"/>
    <property type="molecule type" value="mRNA"/>
</dbReference>
<dbReference type="PIR" id="S54135">
    <property type="entry name" value="S54135"/>
</dbReference>
<dbReference type="SMR" id="P53797"/>
<dbReference type="BioCyc" id="MetaCyc:MONOMER-18247"/>
<dbReference type="UniPathway" id="UPA00799">
    <property type="reaction ID" value="UER00773"/>
</dbReference>
<dbReference type="GO" id="GO:0010287">
    <property type="term" value="C:plastoglobule"/>
    <property type="evidence" value="ECO:0007669"/>
    <property type="project" value="UniProtKB-ARBA"/>
</dbReference>
<dbReference type="GO" id="GO:0046905">
    <property type="term" value="F:15-cis-phytoene synthase activity"/>
    <property type="evidence" value="ECO:0007669"/>
    <property type="project" value="RHEA"/>
</dbReference>
<dbReference type="GO" id="GO:0004311">
    <property type="term" value="F:geranylgeranyl diphosphate synthase activity"/>
    <property type="evidence" value="ECO:0007669"/>
    <property type="project" value="InterPro"/>
</dbReference>
<dbReference type="GO" id="GO:0051996">
    <property type="term" value="F:squalene synthase [NAD(P)H] activity"/>
    <property type="evidence" value="ECO:0007669"/>
    <property type="project" value="InterPro"/>
</dbReference>
<dbReference type="GO" id="GO:0016117">
    <property type="term" value="P:carotenoid biosynthetic process"/>
    <property type="evidence" value="ECO:0007669"/>
    <property type="project" value="UniProtKB-KW"/>
</dbReference>
<dbReference type="CDD" id="cd00683">
    <property type="entry name" value="Trans_IPPS_HH"/>
    <property type="match status" value="1"/>
</dbReference>
<dbReference type="FunFam" id="1.10.600.10:FF:000004">
    <property type="entry name" value="Phytoene synthase chloroplastic"/>
    <property type="match status" value="1"/>
</dbReference>
<dbReference type="Gene3D" id="1.10.600.10">
    <property type="entry name" value="Farnesyl Diphosphate Synthase"/>
    <property type="match status" value="1"/>
</dbReference>
<dbReference type="InterPro" id="IPR008949">
    <property type="entry name" value="Isoprenoid_synthase_dom_sf"/>
</dbReference>
<dbReference type="InterPro" id="IPR002060">
    <property type="entry name" value="Squ/phyt_synthse"/>
</dbReference>
<dbReference type="InterPro" id="IPR019845">
    <property type="entry name" value="Squalene/phytoene_synthase_CS"/>
</dbReference>
<dbReference type="InterPro" id="IPR044843">
    <property type="entry name" value="Trans_IPPS_bact-type"/>
</dbReference>
<dbReference type="InterPro" id="IPR033904">
    <property type="entry name" value="Trans_IPPS_HH"/>
</dbReference>
<dbReference type="PANTHER" id="PTHR31480">
    <property type="entry name" value="BIFUNCTIONAL LYCOPENE CYCLASE/PHYTOENE SYNTHASE"/>
    <property type="match status" value="1"/>
</dbReference>
<dbReference type="Pfam" id="PF00494">
    <property type="entry name" value="SQS_PSY"/>
    <property type="match status" value="1"/>
</dbReference>
<dbReference type="SFLD" id="SFLDG01212">
    <property type="entry name" value="Phytoene_synthase_like"/>
    <property type="match status" value="1"/>
</dbReference>
<dbReference type="SFLD" id="SFLDG01018">
    <property type="entry name" value="Squalene/Phytoene_Synthase_Lik"/>
    <property type="match status" value="1"/>
</dbReference>
<dbReference type="SUPFAM" id="SSF48576">
    <property type="entry name" value="Terpenoid synthases"/>
    <property type="match status" value="1"/>
</dbReference>
<dbReference type="PROSITE" id="PS01044">
    <property type="entry name" value="SQUALEN_PHYTOEN_SYN_1"/>
    <property type="match status" value="1"/>
</dbReference>
<dbReference type="PROSITE" id="PS01045">
    <property type="entry name" value="SQUALEN_PHYTOEN_SYN_2"/>
    <property type="match status" value="1"/>
</dbReference>
<sequence>MVVAILRVVSAIEIPIRLGFSEANWRFSSPKYDNLGRKKSRLSVYSLYTTSKYACVGFEAENNGKFLIRSSLVANPAGEATISSEQKVYDVVLKQAALVKDQTKSSRKSTDVKPDIVLPGTVYLLKDAYDRCGEVCAEYAKTFYLGTLLMTPERRRAIWAIYVWCRRTDELVDGHNASHITPSALDRWEARLEDLFAGRPYDMFDAALSDTVSRFPVDIQPFMDMVEGMRMDLKKSRYKNFDELYLYCYYVAGTVGLMSVPVMGIAPESLAEAESVYNAALALGIANQLTNILRDVGEDARRGRIYLPQDELAEAGLSDEDVFTGKVTDKWRSFMKRQIKRARTFFEQAEKGVTELSQASRWPVWASLLLYRQILDEIEANDYNNFTKRAYVSKVKRLAALPLAYGKSLLIPLSLRPPSLSKA</sequence>
<gene>
    <name type="primary">PSY</name>
</gene>
<proteinExistence type="evidence at transcript level"/>
<feature type="transit peptide" description="Chloroplast" evidence="2">
    <location>
        <begin position="1"/>
        <end position="136"/>
    </location>
</feature>
<feature type="chain" id="PRO_0000029859" description="Phytoene synthase, chloroplastic">
    <location>
        <begin position="137"/>
        <end position="423"/>
    </location>
</feature>
<reference key="1">
    <citation type="online journal article" date="1995" name="Plant Gene Register">
        <title>Nucleotide sequence of a Narcissus pseudonarcissus cDNA for phytoene synthase.</title>
        <authorList>
            <person name="Schledz M."/>
            <person name="Beyer P."/>
        </authorList>
        <locator>PGR95-122</locator>
    </citation>
    <scope>NUCLEOTIDE SEQUENCE [MRNA]</scope>
    <source>
        <tissue>Paracorolla</tissue>
    </source>
</reference>
<keyword id="KW-0125">Carotenoid biosynthesis</keyword>
<keyword id="KW-0150">Chloroplast</keyword>
<keyword id="KW-0414">Isoprene biosynthesis</keyword>
<keyword id="KW-0934">Plastid</keyword>
<keyword id="KW-0808">Transferase</keyword>
<keyword id="KW-0809">Transit peptide</keyword>
<evidence type="ECO:0000250" key="1"/>
<evidence type="ECO:0000255" key="2"/>
<evidence type="ECO:0000305" key="3"/>
<protein>
    <recommendedName>
        <fullName>Phytoene synthase, chloroplastic</fullName>
        <ecNumber>2.5.1.32</ecNumber>
    </recommendedName>
</protein>
<comment type="function">
    <text>Catalyzes the reaction from prephytoene diphosphate to phytoene.</text>
</comment>
<comment type="catalytic activity">
    <reaction>
        <text>2 (2E,6E,10E)-geranylgeranyl diphosphate = 15-cis-phytoene + 2 diphosphate</text>
        <dbReference type="Rhea" id="RHEA:34475"/>
        <dbReference type="ChEBI" id="CHEBI:27787"/>
        <dbReference type="ChEBI" id="CHEBI:33019"/>
        <dbReference type="ChEBI" id="CHEBI:58756"/>
        <dbReference type="EC" id="2.5.1.32"/>
    </reaction>
</comment>
<comment type="pathway">
    <text>Carotenoid biosynthesis; phytoene biosynthesis; all-trans-phytoene from geranylgeranyl diphosphate: step 1/1.</text>
</comment>
<comment type="subunit">
    <text evidence="1">Monomer.</text>
</comment>
<comment type="subcellular location">
    <subcellularLocation>
        <location>Plastid</location>
        <location>Chloroplast</location>
    </subcellularLocation>
</comment>
<comment type="similarity">
    <text evidence="3">Belongs to the phytoene/squalene synthase family.</text>
</comment>